<gene>
    <name type="primary">gpa-15</name>
    <name type="ORF">M04C7.1</name>
</gene>
<protein>
    <recommendedName>
        <fullName>Guanine nucleotide-binding protein alpha-15 subunit</fullName>
    </recommendedName>
</protein>
<evidence type="ECO:0000250" key="1"/>
<evidence type="ECO:0000255" key="2"/>
<evidence type="ECO:0000255" key="3">
    <source>
        <dbReference type="PROSITE-ProRule" id="PRU01230"/>
    </source>
</evidence>
<evidence type="ECO:0000305" key="4"/>
<dbReference type="EMBL" id="AY008137">
    <property type="protein sequence ID" value="AAG32090.1"/>
    <property type="molecule type" value="mRNA"/>
</dbReference>
<dbReference type="EMBL" id="Z83117">
    <property type="protein sequence ID" value="CAB05570.2"/>
    <property type="molecule type" value="Genomic_DNA"/>
</dbReference>
<dbReference type="PIR" id="T23705">
    <property type="entry name" value="T23705"/>
</dbReference>
<dbReference type="RefSeq" id="NP_492312.1">
    <property type="nucleotide sequence ID" value="NM_059911.3"/>
</dbReference>
<dbReference type="SMR" id="P91907"/>
<dbReference type="FunCoup" id="P91907">
    <property type="interactions" value="43"/>
</dbReference>
<dbReference type="STRING" id="6239.M04C7.1.1"/>
<dbReference type="PaxDb" id="6239-M04C7.1.1"/>
<dbReference type="EnsemblMetazoa" id="M04C7.1.1">
    <property type="protein sequence ID" value="M04C7.1.1"/>
    <property type="gene ID" value="WBGene00001677"/>
</dbReference>
<dbReference type="GeneID" id="172645"/>
<dbReference type="KEGG" id="cel:CELE_M04C7.1"/>
<dbReference type="UCSC" id="M04C7.1">
    <property type="organism name" value="c. elegans"/>
</dbReference>
<dbReference type="AGR" id="WB:WBGene00001677"/>
<dbReference type="CTD" id="172645"/>
<dbReference type="WormBase" id="M04C7.1">
    <property type="protein sequence ID" value="CE28623"/>
    <property type="gene ID" value="WBGene00001677"/>
    <property type="gene designation" value="gpa-15"/>
</dbReference>
<dbReference type="eggNOG" id="KOG0082">
    <property type="taxonomic scope" value="Eukaryota"/>
</dbReference>
<dbReference type="GeneTree" id="ENSGT00940000168787"/>
<dbReference type="HOGENOM" id="CLU_014184_6_0_1"/>
<dbReference type="InParanoid" id="P91907"/>
<dbReference type="OMA" id="RAEFQMM"/>
<dbReference type="OrthoDB" id="5817230at2759"/>
<dbReference type="PhylomeDB" id="P91907"/>
<dbReference type="PRO" id="PR:P91907"/>
<dbReference type="Proteomes" id="UP000001940">
    <property type="component" value="Chromosome I"/>
</dbReference>
<dbReference type="GO" id="GO:0005737">
    <property type="term" value="C:cytoplasm"/>
    <property type="evidence" value="ECO:0000318"/>
    <property type="project" value="GO_Central"/>
</dbReference>
<dbReference type="GO" id="GO:0005834">
    <property type="term" value="C:heterotrimeric G-protein complex"/>
    <property type="evidence" value="ECO:0000318"/>
    <property type="project" value="GO_Central"/>
</dbReference>
<dbReference type="GO" id="GO:0097730">
    <property type="term" value="C:non-motile cilium"/>
    <property type="evidence" value="ECO:0000314"/>
    <property type="project" value="UniProtKB"/>
</dbReference>
<dbReference type="GO" id="GO:0001664">
    <property type="term" value="F:G protein-coupled receptor binding"/>
    <property type="evidence" value="ECO:0000318"/>
    <property type="project" value="GO_Central"/>
</dbReference>
<dbReference type="GO" id="GO:0031683">
    <property type="term" value="F:G-protein beta/gamma-subunit complex binding"/>
    <property type="evidence" value="ECO:0000318"/>
    <property type="project" value="GO_Central"/>
</dbReference>
<dbReference type="GO" id="GO:0005525">
    <property type="term" value="F:GTP binding"/>
    <property type="evidence" value="ECO:0007669"/>
    <property type="project" value="UniProtKB-KW"/>
</dbReference>
<dbReference type="GO" id="GO:0003924">
    <property type="term" value="F:GTPase activity"/>
    <property type="evidence" value="ECO:0000318"/>
    <property type="project" value="GO_Central"/>
</dbReference>
<dbReference type="GO" id="GO:0046872">
    <property type="term" value="F:metal ion binding"/>
    <property type="evidence" value="ECO:0007669"/>
    <property type="project" value="UniProtKB-KW"/>
</dbReference>
<dbReference type="GO" id="GO:0007188">
    <property type="term" value="P:adenylate cyclase-modulating G protein-coupled receptor signaling pathway"/>
    <property type="evidence" value="ECO:0000318"/>
    <property type="project" value="GO_Central"/>
</dbReference>
<dbReference type="CDD" id="cd00066">
    <property type="entry name" value="G-alpha"/>
    <property type="match status" value="1"/>
</dbReference>
<dbReference type="FunFam" id="1.10.400.10:FF:000030">
    <property type="entry name" value="Guanine nucleotide-binding protein alpha-8 subunit"/>
    <property type="match status" value="1"/>
</dbReference>
<dbReference type="FunFam" id="3.40.50.300:FF:002307">
    <property type="entry name" value="Guanine nucleotide-binding protein G(k) subunit alpha"/>
    <property type="match status" value="1"/>
</dbReference>
<dbReference type="Gene3D" id="1.10.400.10">
    <property type="entry name" value="GI Alpha 1, domain 2-like"/>
    <property type="match status" value="1"/>
</dbReference>
<dbReference type="Gene3D" id="3.40.50.300">
    <property type="entry name" value="P-loop containing nucleotide triphosphate hydrolases"/>
    <property type="match status" value="1"/>
</dbReference>
<dbReference type="InterPro" id="IPR001019">
    <property type="entry name" value="Gprotein_alpha_su"/>
</dbReference>
<dbReference type="InterPro" id="IPR011025">
    <property type="entry name" value="GproteinA_insert"/>
</dbReference>
<dbReference type="InterPro" id="IPR027417">
    <property type="entry name" value="P-loop_NTPase"/>
</dbReference>
<dbReference type="PANTHER" id="PTHR10218">
    <property type="entry name" value="GTP-BINDING PROTEIN ALPHA SUBUNIT"/>
    <property type="match status" value="1"/>
</dbReference>
<dbReference type="PANTHER" id="PTHR10218:SF323">
    <property type="entry name" value="GUANINE NUCLEOTIDE-BINDING PROTEIN ALPHA-15 SUBUNIT"/>
    <property type="match status" value="1"/>
</dbReference>
<dbReference type="Pfam" id="PF00503">
    <property type="entry name" value="G-alpha"/>
    <property type="match status" value="1"/>
</dbReference>
<dbReference type="PRINTS" id="PR00318">
    <property type="entry name" value="GPROTEINA"/>
</dbReference>
<dbReference type="SMART" id="SM00275">
    <property type="entry name" value="G_alpha"/>
    <property type="match status" value="1"/>
</dbReference>
<dbReference type="SUPFAM" id="SSF52540">
    <property type="entry name" value="P-loop containing nucleoside triphosphate hydrolases"/>
    <property type="match status" value="1"/>
</dbReference>
<dbReference type="SUPFAM" id="SSF47895">
    <property type="entry name" value="Transducin (alpha subunit), insertion domain"/>
    <property type="match status" value="1"/>
</dbReference>
<dbReference type="PROSITE" id="PS51882">
    <property type="entry name" value="G_ALPHA"/>
    <property type="match status" value="1"/>
</dbReference>
<organism>
    <name type="scientific">Caenorhabditis elegans</name>
    <dbReference type="NCBI Taxonomy" id="6239"/>
    <lineage>
        <taxon>Eukaryota</taxon>
        <taxon>Metazoa</taxon>
        <taxon>Ecdysozoa</taxon>
        <taxon>Nematoda</taxon>
        <taxon>Chromadorea</taxon>
        <taxon>Rhabditida</taxon>
        <taxon>Rhabditina</taxon>
        <taxon>Rhabditomorpha</taxon>
        <taxon>Rhabditoidea</taxon>
        <taxon>Rhabditidae</taxon>
        <taxon>Peloderinae</taxon>
        <taxon>Caenorhabditis</taxon>
    </lineage>
</organism>
<comment type="function">
    <text>Guanine nucleotide-binding proteins (G proteins) are involved as modulators or transducers in various transmembrane signaling systems.</text>
</comment>
<comment type="subunit">
    <text>G proteins are composed of 3 units; alpha, beta and gamma. The alpha chain contains the guanine nucleotide binding site.</text>
</comment>
<comment type="similarity">
    <text evidence="4">Belongs to the G-alpha family.</text>
</comment>
<name>GPA15_CAEEL</name>
<accession>P91907</accession>
<accession>Q9BIG1</accession>
<reference key="1">
    <citation type="submission" date="2000-09" db="EMBL/GenBank/DDBJ databases">
        <title>Interaction analysis of the complete G-alpha subfamily of heterotrimeric G proteins from Caenorhabditis elegans.</title>
        <authorList>
            <person name="Cuppen E."/>
            <person name="Jansen G."/>
            <person name="Plasterk R.H.A."/>
        </authorList>
    </citation>
    <scope>NUCLEOTIDE SEQUENCE [MRNA]</scope>
    <source>
        <strain>Bristol N2</strain>
    </source>
</reference>
<reference key="2">
    <citation type="journal article" date="1998" name="Science">
        <title>Genome sequence of the nematode C. elegans: a platform for investigating biology.</title>
        <authorList>
            <consortium name="The C. elegans sequencing consortium"/>
        </authorList>
    </citation>
    <scope>NUCLEOTIDE SEQUENCE [LARGE SCALE GENOMIC DNA]</scope>
    <source>
        <strain>Bristol N2</strain>
    </source>
</reference>
<reference key="3">
    <citation type="journal article" date="1999" name="Nat. Genet.">
        <title>The complete family of genes encoding G proteins of Caenorhabditis elegans.</title>
        <authorList>
            <person name="Jansen G."/>
            <person name="Thijssen K.L."/>
            <person name="Werner P."/>
            <person name="van der Horst M."/>
            <person name="Hazendonk E."/>
            <person name="Plasterk R.H.A."/>
        </authorList>
    </citation>
    <scope>GENE FAMILY</scope>
    <scope>NOMENCLATURE</scope>
</reference>
<sequence>MGSTCSTPESKEQKRINSVIDKQIRKDEDDEIGNQKLLLLGTGECGKSTILKQINILHSSGFSKADLKNVAGTVYSNIIQGVATLLKAKDHFYYELSTPELDADAQHILSLADSSKDAMPFIPLTFNAIKRLWHDPVVQKTFERRAEFQMMDTLVYFMNELDRINNADYIPTVDDMLRIRIPTMGVVQQTIEIKGTKFRIYDVGGQRSERRKWIHLFDNVNATIFISAINEFNQKLNEDGQTNRMKESIKLFETICNSRWFVQAAMILFLNKRDLFEQKLKTTSINVLFSTYQGSNDYAECVAYIQMRFERLNKYSDIKKIYTHVTCATDTNQIQLVIDSVVDMVIGRNLRGTGME</sequence>
<keyword id="KW-0342">GTP-binding</keyword>
<keyword id="KW-0449">Lipoprotein</keyword>
<keyword id="KW-0460">Magnesium</keyword>
<keyword id="KW-0479">Metal-binding</keyword>
<keyword id="KW-0519">Myristate</keyword>
<keyword id="KW-0547">Nucleotide-binding</keyword>
<keyword id="KW-0564">Palmitate</keyword>
<keyword id="KW-1185">Reference proteome</keyword>
<keyword id="KW-0807">Transducer</keyword>
<feature type="initiator methionine" description="Removed" evidence="2">
    <location>
        <position position="1"/>
    </location>
</feature>
<feature type="chain" id="PRO_0000203655" description="Guanine nucleotide-binding protein alpha-15 subunit">
    <location>
        <begin position="2"/>
        <end position="356"/>
    </location>
</feature>
<feature type="domain" description="G-alpha" evidence="3">
    <location>
        <begin position="33"/>
        <end position="356"/>
    </location>
</feature>
<feature type="region of interest" description="G1 motif" evidence="3">
    <location>
        <begin position="36"/>
        <end position="49"/>
    </location>
</feature>
<feature type="region of interest" description="G2 motif" evidence="3">
    <location>
        <begin position="175"/>
        <end position="183"/>
    </location>
</feature>
<feature type="region of interest" description="G3 motif" evidence="3">
    <location>
        <begin position="198"/>
        <end position="207"/>
    </location>
</feature>
<feature type="region of interest" description="G4 motif" evidence="3">
    <location>
        <begin position="267"/>
        <end position="274"/>
    </location>
</feature>
<feature type="region of interest" description="G5 motif" evidence="3">
    <location>
        <begin position="326"/>
        <end position="331"/>
    </location>
</feature>
<feature type="binding site" evidence="1">
    <location>
        <begin position="41"/>
        <end position="48"/>
    </location>
    <ligand>
        <name>GTP</name>
        <dbReference type="ChEBI" id="CHEBI:37565"/>
    </ligand>
</feature>
<feature type="binding site" evidence="1">
    <location>
        <position position="48"/>
    </location>
    <ligand>
        <name>Mg(2+)</name>
        <dbReference type="ChEBI" id="CHEBI:18420"/>
    </ligand>
</feature>
<feature type="binding site" evidence="1">
    <location>
        <begin position="177"/>
        <end position="183"/>
    </location>
    <ligand>
        <name>GTP</name>
        <dbReference type="ChEBI" id="CHEBI:37565"/>
    </ligand>
</feature>
<feature type="binding site" evidence="1">
    <location>
        <position position="183"/>
    </location>
    <ligand>
        <name>Mg(2+)</name>
        <dbReference type="ChEBI" id="CHEBI:18420"/>
    </ligand>
</feature>
<feature type="binding site" evidence="1">
    <location>
        <begin position="202"/>
        <end position="206"/>
    </location>
    <ligand>
        <name>GTP</name>
        <dbReference type="ChEBI" id="CHEBI:37565"/>
    </ligand>
</feature>
<feature type="binding site" evidence="1">
    <location>
        <begin position="271"/>
        <end position="274"/>
    </location>
    <ligand>
        <name>GTP</name>
        <dbReference type="ChEBI" id="CHEBI:37565"/>
    </ligand>
</feature>
<feature type="binding site" evidence="1">
    <location>
        <position position="328"/>
    </location>
    <ligand>
        <name>GTP</name>
        <dbReference type="ChEBI" id="CHEBI:37565"/>
    </ligand>
</feature>
<feature type="lipid moiety-binding region" description="N-myristoyl glycine" evidence="2">
    <location>
        <position position="2"/>
    </location>
</feature>
<feature type="lipid moiety-binding region" description="S-palmitoyl cysteine" evidence="2">
    <location>
        <position position="5"/>
    </location>
</feature>
<proteinExistence type="evidence at transcript level"/>